<protein>
    <recommendedName>
        <fullName evidence="1">Lipoyl synthase</fullName>
        <ecNumber evidence="1">2.8.1.8</ecNumber>
    </recommendedName>
    <alternativeName>
        <fullName evidence="1">Lip-syn</fullName>
        <shortName evidence="1">LS</shortName>
    </alternativeName>
    <alternativeName>
        <fullName evidence="1">Lipoate synthase</fullName>
    </alternativeName>
    <alternativeName>
        <fullName evidence="1">Lipoic acid synthase</fullName>
    </alternativeName>
    <alternativeName>
        <fullName evidence="1">Sulfur insertion protein LipA</fullName>
    </alternativeName>
</protein>
<accession>A7MNP9</accession>
<sequence length="321" mass="35961">MSKPIVMERGVKYRDADKMALIPVKNVATEREALLRKPEWMKIKLPADSTRIQGIKAAMRKNGLHSVCEEASCPNLAECFNHGTATFMILGAICTRRCPFCDVAHGRPVAPDANEPQKLAQTIADMALRYVVITSVDRDDLRDGGAQHFADCITAIREKSPSIKIETLVPDFRGRMDRALEILTATPPDVFNHNLENVPRLYRQVRPGADYNWSLKLLERFKEAHPEIPTKSGLMVGLGETNAEIIEVMRDLRAHGVTMLTLGQYLQPSRHHLPVQRYVSPDEFEEMKAEAMAMGFTHAACGPFVRSSYHADLQAKGEEVK</sequence>
<evidence type="ECO:0000255" key="1">
    <source>
        <dbReference type="HAMAP-Rule" id="MF_00206"/>
    </source>
</evidence>
<evidence type="ECO:0000255" key="2">
    <source>
        <dbReference type="PROSITE-ProRule" id="PRU01266"/>
    </source>
</evidence>
<proteinExistence type="inferred from homology"/>
<keyword id="KW-0004">4Fe-4S</keyword>
<keyword id="KW-0963">Cytoplasm</keyword>
<keyword id="KW-0408">Iron</keyword>
<keyword id="KW-0411">Iron-sulfur</keyword>
<keyword id="KW-0479">Metal-binding</keyword>
<keyword id="KW-1185">Reference proteome</keyword>
<keyword id="KW-0949">S-adenosyl-L-methionine</keyword>
<keyword id="KW-0808">Transferase</keyword>
<feature type="chain" id="PRO_1000012220" description="Lipoyl synthase">
    <location>
        <begin position="1"/>
        <end position="321"/>
    </location>
</feature>
<feature type="domain" description="Radical SAM core" evidence="2">
    <location>
        <begin position="80"/>
        <end position="297"/>
    </location>
</feature>
<feature type="binding site" evidence="1">
    <location>
        <position position="68"/>
    </location>
    <ligand>
        <name>[4Fe-4S] cluster</name>
        <dbReference type="ChEBI" id="CHEBI:49883"/>
        <label>1</label>
    </ligand>
</feature>
<feature type="binding site" evidence="1">
    <location>
        <position position="73"/>
    </location>
    <ligand>
        <name>[4Fe-4S] cluster</name>
        <dbReference type="ChEBI" id="CHEBI:49883"/>
        <label>1</label>
    </ligand>
</feature>
<feature type="binding site" evidence="1">
    <location>
        <position position="79"/>
    </location>
    <ligand>
        <name>[4Fe-4S] cluster</name>
        <dbReference type="ChEBI" id="CHEBI:49883"/>
        <label>1</label>
    </ligand>
</feature>
<feature type="binding site" evidence="1">
    <location>
        <position position="94"/>
    </location>
    <ligand>
        <name>[4Fe-4S] cluster</name>
        <dbReference type="ChEBI" id="CHEBI:49883"/>
        <label>2</label>
        <note>4Fe-4S-S-AdoMet</note>
    </ligand>
</feature>
<feature type="binding site" evidence="1">
    <location>
        <position position="98"/>
    </location>
    <ligand>
        <name>[4Fe-4S] cluster</name>
        <dbReference type="ChEBI" id="CHEBI:49883"/>
        <label>2</label>
        <note>4Fe-4S-S-AdoMet</note>
    </ligand>
</feature>
<feature type="binding site" evidence="1">
    <location>
        <position position="101"/>
    </location>
    <ligand>
        <name>[4Fe-4S] cluster</name>
        <dbReference type="ChEBI" id="CHEBI:49883"/>
        <label>2</label>
        <note>4Fe-4S-S-AdoMet</note>
    </ligand>
</feature>
<feature type="binding site" evidence="1">
    <location>
        <position position="308"/>
    </location>
    <ligand>
        <name>[4Fe-4S] cluster</name>
        <dbReference type="ChEBI" id="CHEBI:49883"/>
        <label>1</label>
    </ligand>
</feature>
<dbReference type="EC" id="2.8.1.8" evidence="1"/>
<dbReference type="EMBL" id="CP000783">
    <property type="protein sequence ID" value="ABU77932.1"/>
    <property type="molecule type" value="Genomic_DNA"/>
</dbReference>
<dbReference type="RefSeq" id="WP_004387213.1">
    <property type="nucleotide sequence ID" value="NC_009778.1"/>
</dbReference>
<dbReference type="SMR" id="A7MNP9"/>
<dbReference type="GeneID" id="56731492"/>
<dbReference type="KEGG" id="esa:ESA_02700"/>
<dbReference type="HOGENOM" id="CLU_033144_2_1_6"/>
<dbReference type="UniPathway" id="UPA00538">
    <property type="reaction ID" value="UER00593"/>
</dbReference>
<dbReference type="Proteomes" id="UP000000260">
    <property type="component" value="Chromosome"/>
</dbReference>
<dbReference type="GO" id="GO:0005737">
    <property type="term" value="C:cytoplasm"/>
    <property type="evidence" value="ECO:0007669"/>
    <property type="project" value="UniProtKB-SubCell"/>
</dbReference>
<dbReference type="GO" id="GO:0051539">
    <property type="term" value="F:4 iron, 4 sulfur cluster binding"/>
    <property type="evidence" value="ECO:0007669"/>
    <property type="project" value="UniProtKB-UniRule"/>
</dbReference>
<dbReference type="GO" id="GO:0016992">
    <property type="term" value="F:lipoate synthase activity"/>
    <property type="evidence" value="ECO:0007669"/>
    <property type="project" value="UniProtKB-UniRule"/>
</dbReference>
<dbReference type="GO" id="GO:0046872">
    <property type="term" value="F:metal ion binding"/>
    <property type="evidence" value="ECO:0007669"/>
    <property type="project" value="UniProtKB-KW"/>
</dbReference>
<dbReference type="CDD" id="cd01335">
    <property type="entry name" value="Radical_SAM"/>
    <property type="match status" value="1"/>
</dbReference>
<dbReference type="FunFam" id="3.20.20.70:FF:000023">
    <property type="entry name" value="Lipoyl synthase"/>
    <property type="match status" value="1"/>
</dbReference>
<dbReference type="Gene3D" id="3.20.20.70">
    <property type="entry name" value="Aldolase class I"/>
    <property type="match status" value="1"/>
</dbReference>
<dbReference type="HAMAP" id="MF_00206">
    <property type="entry name" value="Lipoyl_synth"/>
    <property type="match status" value="1"/>
</dbReference>
<dbReference type="InterPro" id="IPR013785">
    <property type="entry name" value="Aldolase_TIM"/>
</dbReference>
<dbReference type="InterPro" id="IPR006638">
    <property type="entry name" value="Elp3/MiaA/NifB-like_rSAM"/>
</dbReference>
<dbReference type="InterPro" id="IPR031691">
    <property type="entry name" value="LIAS_N"/>
</dbReference>
<dbReference type="InterPro" id="IPR003698">
    <property type="entry name" value="Lipoyl_synth"/>
</dbReference>
<dbReference type="InterPro" id="IPR007197">
    <property type="entry name" value="rSAM"/>
</dbReference>
<dbReference type="NCBIfam" id="TIGR00510">
    <property type="entry name" value="lipA"/>
    <property type="match status" value="1"/>
</dbReference>
<dbReference type="NCBIfam" id="NF004019">
    <property type="entry name" value="PRK05481.1"/>
    <property type="match status" value="1"/>
</dbReference>
<dbReference type="NCBIfam" id="NF009544">
    <property type="entry name" value="PRK12928.1"/>
    <property type="match status" value="1"/>
</dbReference>
<dbReference type="PANTHER" id="PTHR10949">
    <property type="entry name" value="LIPOYL SYNTHASE"/>
    <property type="match status" value="1"/>
</dbReference>
<dbReference type="PANTHER" id="PTHR10949:SF0">
    <property type="entry name" value="LIPOYL SYNTHASE, MITOCHONDRIAL"/>
    <property type="match status" value="1"/>
</dbReference>
<dbReference type="Pfam" id="PF16881">
    <property type="entry name" value="LIAS_N"/>
    <property type="match status" value="1"/>
</dbReference>
<dbReference type="Pfam" id="PF04055">
    <property type="entry name" value="Radical_SAM"/>
    <property type="match status" value="1"/>
</dbReference>
<dbReference type="PIRSF" id="PIRSF005963">
    <property type="entry name" value="Lipoyl_synth"/>
    <property type="match status" value="1"/>
</dbReference>
<dbReference type="SFLD" id="SFLDF00271">
    <property type="entry name" value="lipoyl_synthase"/>
    <property type="match status" value="1"/>
</dbReference>
<dbReference type="SFLD" id="SFLDS00029">
    <property type="entry name" value="Radical_SAM"/>
    <property type="match status" value="1"/>
</dbReference>
<dbReference type="SMART" id="SM00729">
    <property type="entry name" value="Elp3"/>
    <property type="match status" value="1"/>
</dbReference>
<dbReference type="SUPFAM" id="SSF102114">
    <property type="entry name" value="Radical SAM enzymes"/>
    <property type="match status" value="1"/>
</dbReference>
<dbReference type="PROSITE" id="PS51918">
    <property type="entry name" value="RADICAL_SAM"/>
    <property type="match status" value="1"/>
</dbReference>
<organism>
    <name type="scientific">Cronobacter sakazakii (strain ATCC BAA-894)</name>
    <name type="common">Enterobacter sakazakii</name>
    <dbReference type="NCBI Taxonomy" id="290339"/>
    <lineage>
        <taxon>Bacteria</taxon>
        <taxon>Pseudomonadati</taxon>
        <taxon>Pseudomonadota</taxon>
        <taxon>Gammaproteobacteria</taxon>
        <taxon>Enterobacterales</taxon>
        <taxon>Enterobacteriaceae</taxon>
        <taxon>Cronobacter</taxon>
    </lineage>
</organism>
<name>LIPA_CROS8</name>
<reference key="1">
    <citation type="journal article" date="2010" name="PLoS ONE">
        <title>Genome sequence of Cronobacter sakazakii BAA-894 and comparative genomic hybridization analysis with other Cronobacter species.</title>
        <authorList>
            <person name="Kucerova E."/>
            <person name="Clifton S.W."/>
            <person name="Xia X.Q."/>
            <person name="Long F."/>
            <person name="Porwollik S."/>
            <person name="Fulton L."/>
            <person name="Fronick C."/>
            <person name="Minx P."/>
            <person name="Kyung K."/>
            <person name="Warren W."/>
            <person name="Fulton R."/>
            <person name="Feng D."/>
            <person name="Wollam A."/>
            <person name="Shah N."/>
            <person name="Bhonagiri V."/>
            <person name="Nash W.E."/>
            <person name="Hallsworth-Pepin K."/>
            <person name="Wilson R.K."/>
            <person name="McClelland M."/>
            <person name="Forsythe S.J."/>
        </authorList>
    </citation>
    <scope>NUCLEOTIDE SEQUENCE [LARGE SCALE GENOMIC DNA]</scope>
    <source>
        <strain>ATCC BAA-894</strain>
    </source>
</reference>
<gene>
    <name evidence="1" type="primary">lipA</name>
    <name type="ordered locus">ESA_02700</name>
</gene>
<comment type="function">
    <text evidence="1">Catalyzes the radical-mediated insertion of two sulfur atoms into the C-6 and C-8 positions of the octanoyl moiety bound to the lipoyl domains of lipoate-dependent enzymes, thereby converting the octanoylated domains into lipoylated derivatives.</text>
</comment>
<comment type="catalytic activity">
    <reaction evidence="1">
        <text>[[Fe-S] cluster scaffold protein carrying a second [4Fe-4S](2+) cluster] + N(6)-octanoyl-L-lysyl-[protein] + 2 oxidized [2Fe-2S]-[ferredoxin] + 2 S-adenosyl-L-methionine + 4 H(+) = [[Fe-S] cluster scaffold protein] + N(6)-[(R)-dihydrolipoyl]-L-lysyl-[protein] + 4 Fe(3+) + 2 hydrogen sulfide + 2 5'-deoxyadenosine + 2 L-methionine + 2 reduced [2Fe-2S]-[ferredoxin]</text>
        <dbReference type="Rhea" id="RHEA:16585"/>
        <dbReference type="Rhea" id="RHEA-COMP:9928"/>
        <dbReference type="Rhea" id="RHEA-COMP:10000"/>
        <dbReference type="Rhea" id="RHEA-COMP:10001"/>
        <dbReference type="Rhea" id="RHEA-COMP:10475"/>
        <dbReference type="Rhea" id="RHEA-COMP:14568"/>
        <dbReference type="Rhea" id="RHEA-COMP:14569"/>
        <dbReference type="ChEBI" id="CHEBI:15378"/>
        <dbReference type="ChEBI" id="CHEBI:17319"/>
        <dbReference type="ChEBI" id="CHEBI:29034"/>
        <dbReference type="ChEBI" id="CHEBI:29919"/>
        <dbReference type="ChEBI" id="CHEBI:33722"/>
        <dbReference type="ChEBI" id="CHEBI:33737"/>
        <dbReference type="ChEBI" id="CHEBI:33738"/>
        <dbReference type="ChEBI" id="CHEBI:57844"/>
        <dbReference type="ChEBI" id="CHEBI:59789"/>
        <dbReference type="ChEBI" id="CHEBI:78809"/>
        <dbReference type="ChEBI" id="CHEBI:83100"/>
        <dbReference type="EC" id="2.8.1.8"/>
    </reaction>
</comment>
<comment type="cofactor">
    <cofactor evidence="1">
        <name>[4Fe-4S] cluster</name>
        <dbReference type="ChEBI" id="CHEBI:49883"/>
    </cofactor>
    <text evidence="1">Binds 2 [4Fe-4S] clusters per subunit. One cluster is coordinated with 3 cysteines and an exchangeable S-adenosyl-L-methionine.</text>
</comment>
<comment type="pathway">
    <text evidence="1">Protein modification; protein lipoylation via endogenous pathway; protein N(6)-(lipoyl)lysine from octanoyl-[acyl-carrier-protein]: step 2/2.</text>
</comment>
<comment type="subcellular location">
    <subcellularLocation>
        <location evidence="1">Cytoplasm</location>
    </subcellularLocation>
</comment>
<comment type="similarity">
    <text evidence="1">Belongs to the radical SAM superfamily. Lipoyl synthase family.</text>
</comment>